<sequence>MLYKFTVLLLIYSYLRNLQAVNMENKDLIPNITIVCTVYKPDGKEFTATYSKLKDPIEIIEKEAQFLDRFINNTIKSQNRIPEEKRQIKDGDEVLYSIKLKHANDAGRHLIFKHGMELMDCLLDRKICENEYNGSFTYSSKTDQELLDNSVTEFIENSTEEEMMIIDNAIDDIMCDDCNLFEMVDDYYLKWVLY</sequence>
<dbReference type="EMBL" id="AY509253">
    <property type="protein sequence ID" value="AAS00930.1"/>
    <property type="molecule type" value="Genomic_DNA"/>
</dbReference>
<dbReference type="RefSeq" id="YP_024583.1">
    <property type="nucleotide sequence ID" value="NC_005881.2"/>
</dbReference>
<dbReference type="KEGG" id="vg:2948260"/>
<dbReference type="Proteomes" id="UP000007021">
    <property type="component" value="Segment"/>
</dbReference>
<accession>Q6R7I5</accession>
<gene>
    <name type="ORF">ORF39</name>
</gene>
<feature type="signal peptide" evidence="1">
    <location>
        <begin position="1"/>
        <end position="20"/>
    </location>
</feature>
<feature type="chain" id="PRO_0000385068" description="Uncharacterized protein ORF39">
    <location>
        <begin position="21"/>
        <end position="194"/>
    </location>
</feature>
<feature type="glycosylation site" description="N-linked (GlcNAc...) asparagine; by host" evidence="1">
    <location>
        <position position="31"/>
    </location>
</feature>
<feature type="glycosylation site" description="N-linked (GlcNAc...) asparagine; by host" evidence="1">
    <location>
        <position position="72"/>
    </location>
</feature>
<feature type="glycosylation site" description="N-linked (GlcNAc...) asparagine; by host" evidence="1">
    <location>
        <position position="133"/>
    </location>
</feature>
<feature type="glycosylation site" description="N-linked (GlcNAc...) asparagine; by host" evidence="1">
    <location>
        <position position="157"/>
    </location>
</feature>
<reference key="1">
    <citation type="journal article" date="2005" name="J. Gen. Virol.">
        <title>A novel class of herpesvirus with bivalve hosts.</title>
        <authorList>
            <person name="Davison A.J."/>
            <person name="Trus B.L."/>
            <person name="Cheng N."/>
            <person name="Steven A.C."/>
            <person name="Watson M.S."/>
            <person name="Cunningham C."/>
            <person name="Le Deuff R.M."/>
            <person name="Renault T."/>
        </authorList>
    </citation>
    <scope>NUCLEOTIDE SEQUENCE [LARGE SCALE GENOMIC DNA]</scope>
</reference>
<keyword id="KW-0325">Glycoprotein</keyword>
<keyword id="KW-1185">Reference proteome</keyword>
<keyword id="KW-0732">Signal</keyword>
<organism>
    <name type="scientific">Ostreid herpesvirus 1 (isolate France)</name>
    <name type="common">OsHV-1</name>
    <name type="synonym">Pacific oyster herpesvirus</name>
    <dbReference type="NCBI Taxonomy" id="654903"/>
    <lineage>
        <taxon>Viruses</taxon>
        <taxon>Duplodnaviria</taxon>
        <taxon>Heunggongvirae</taxon>
        <taxon>Peploviricota</taxon>
        <taxon>Herviviricetes</taxon>
        <taxon>Herpesvirales</taxon>
        <taxon>Malacoherpesviridae</taxon>
        <taxon>Ostreavirus</taxon>
        <taxon>Ostreavirus ostreidmalaco1</taxon>
        <taxon>Ostreid herpesvirus 1</taxon>
    </lineage>
</organism>
<organismHost>
    <name type="scientific">Magallana gigas</name>
    <name type="common">Pacific oyster</name>
    <name type="synonym">Crassostrea gigas</name>
    <dbReference type="NCBI Taxonomy" id="29159"/>
</organismHost>
<organismHost>
    <name type="scientific">Pecten maximus</name>
    <name type="common">King scallop</name>
    <name type="synonym">Pilgrim's clam</name>
    <dbReference type="NCBI Taxonomy" id="6579"/>
</organismHost>
<proteinExistence type="inferred from homology"/>
<protein>
    <recommendedName>
        <fullName>Uncharacterized protein ORF39</fullName>
    </recommendedName>
</protein>
<name>Y039_OSHVF</name>
<evidence type="ECO:0000255" key="1"/>